<gene>
    <name evidence="1" type="primary">rlmN</name>
    <name type="ordered locus">JTY_2896</name>
</gene>
<organism>
    <name type="scientific">Mycobacterium bovis (strain BCG / Tokyo 172 / ATCC 35737 / TMC 1019)</name>
    <dbReference type="NCBI Taxonomy" id="561275"/>
    <lineage>
        <taxon>Bacteria</taxon>
        <taxon>Bacillati</taxon>
        <taxon>Actinomycetota</taxon>
        <taxon>Actinomycetes</taxon>
        <taxon>Mycobacteriales</taxon>
        <taxon>Mycobacteriaceae</taxon>
        <taxon>Mycobacterium</taxon>
        <taxon>Mycobacterium tuberculosis complex</taxon>
    </lineage>
</organism>
<evidence type="ECO:0000255" key="1">
    <source>
        <dbReference type="HAMAP-Rule" id="MF_01849"/>
    </source>
</evidence>
<evidence type="ECO:0000255" key="2">
    <source>
        <dbReference type="PROSITE-ProRule" id="PRU01266"/>
    </source>
</evidence>
<protein>
    <recommendedName>
        <fullName evidence="1">Probable dual-specificity RNA methyltransferase RlmN</fullName>
        <ecNumber evidence="1">2.1.1.192</ecNumber>
    </recommendedName>
    <alternativeName>
        <fullName evidence="1">23S rRNA (adenine(2503)-C(2))-methyltransferase</fullName>
    </alternativeName>
    <alternativeName>
        <fullName evidence="1">23S rRNA m2A2503 methyltransferase</fullName>
    </alternativeName>
    <alternativeName>
        <fullName evidence="1">Ribosomal RNA large subunit methyltransferase N</fullName>
    </alternativeName>
    <alternativeName>
        <fullName evidence="1">tRNA (adenine(37)-C(2))-methyltransferase</fullName>
    </alternativeName>
    <alternativeName>
        <fullName evidence="1">tRNA m2A37 methyltransferase</fullName>
    </alternativeName>
</protein>
<feature type="chain" id="PRO_1000188585" description="Probable dual-specificity RNA methyltransferase RlmN">
    <location>
        <begin position="1"/>
        <end position="364"/>
    </location>
</feature>
<feature type="domain" description="Radical SAM core" evidence="2">
    <location>
        <begin position="112"/>
        <end position="350"/>
    </location>
</feature>
<feature type="active site" description="Proton acceptor" evidence="1">
    <location>
        <position position="106"/>
    </location>
</feature>
<feature type="active site" description="S-methylcysteine intermediate" evidence="1">
    <location>
        <position position="356"/>
    </location>
</feature>
<feature type="binding site" evidence="1">
    <location>
        <position position="126"/>
    </location>
    <ligand>
        <name>[4Fe-4S] cluster</name>
        <dbReference type="ChEBI" id="CHEBI:49883"/>
        <note>4Fe-4S-S-AdoMet</note>
    </ligand>
</feature>
<feature type="binding site" evidence="1">
    <location>
        <position position="130"/>
    </location>
    <ligand>
        <name>[4Fe-4S] cluster</name>
        <dbReference type="ChEBI" id="CHEBI:49883"/>
        <note>4Fe-4S-S-AdoMet</note>
    </ligand>
</feature>
<feature type="binding site" evidence="1">
    <location>
        <position position="133"/>
    </location>
    <ligand>
        <name>[4Fe-4S] cluster</name>
        <dbReference type="ChEBI" id="CHEBI:49883"/>
        <note>4Fe-4S-S-AdoMet</note>
    </ligand>
</feature>
<feature type="binding site" evidence="1">
    <location>
        <begin position="177"/>
        <end position="178"/>
    </location>
    <ligand>
        <name>S-adenosyl-L-methionine</name>
        <dbReference type="ChEBI" id="CHEBI:59789"/>
    </ligand>
</feature>
<feature type="binding site" evidence="1">
    <location>
        <position position="211"/>
    </location>
    <ligand>
        <name>S-adenosyl-L-methionine</name>
        <dbReference type="ChEBI" id="CHEBI:59789"/>
    </ligand>
</feature>
<feature type="binding site" evidence="1">
    <location>
        <begin position="234"/>
        <end position="236"/>
    </location>
    <ligand>
        <name>S-adenosyl-L-methionine</name>
        <dbReference type="ChEBI" id="CHEBI:59789"/>
    </ligand>
</feature>
<feature type="binding site" evidence="1">
    <location>
        <position position="313"/>
    </location>
    <ligand>
        <name>S-adenosyl-L-methionine</name>
        <dbReference type="ChEBI" id="CHEBI:59789"/>
    </ligand>
</feature>
<feature type="disulfide bond" description="(transient)" evidence="1">
    <location>
        <begin position="119"/>
        <end position="356"/>
    </location>
</feature>
<proteinExistence type="inferred from homology"/>
<accession>C1AFZ5</accession>
<dbReference type="EC" id="2.1.1.192" evidence="1"/>
<dbReference type="EMBL" id="AP010918">
    <property type="protein sequence ID" value="BAH27174.1"/>
    <property type="molecule type" value="Genomic_DNA"/>
</dbReference>
<dbReference type="RefSeq" id="WP_003414658.1">
    <property type="nucleotide sequence ID" value="NZ_CP014566.1"/>
</dbReference>
<dbReference type="SMR" id="C1AFZ5"/>
<dbReference type="GeneID" id="45426868"/>
<dbReference type="KEGG" id="mbt:JTY_2896"/>
<dbReference type="HOGENOM" id="CLU_029101_0_2_11"/>
<dbReference type="GO" id="GO:0005737">
    <property type="term" value="C:cytoplasm"/>
    <property type="evidence" value="ECO:0007669"/>
    <property type="project" value="UniProtKB-SubCell"/>
</dbReference>
<dbReference type="GO" id="GO:0051539">
    <property type="term" value="F:4 iron, 4 sulfur cluster binding"/>
    <property type="evidence" value="ECO:0007669"/>
    <property type="project" value="UniProtKB-UniRule"/>
</dbReference>
<dbReference type="GO" id="GO:0046872">
    <property type="term" value="F:metal ion binding"/>
    <property type="evidence" value="ECO:0007669"/>
    <property type="project" value="UniProtKB-KW"/>
</dbReference>
<dbReference type="GO" id="GO:0070040">
    <property type="term" value="F:rRNA (adenine(2503)-C2-)-methyltransferase activity"/>
    <property type="evidence" value="ECO:0007669"/>
    <property type="project" value="UniProtKB-UniRule"/>
</dbReference>
<dbReference type="GO" id="GO:0019843">
    <property type="term" value="F:rRNA binding"/>
    <property type="evidence" value="ECO:0007669"/>
    <property type="project" value="UniProtKB-UniRule"/>
</dbReference>
<dbReference type="GO" id="GO:0002935">
    <property type="term" value="F:tRNA (adenine(37)-C2)-methyltransferase activity"/>
    <property type="evidence" value="ECO:0007669"/>
    <property type="project" value="UniProtKB-UniRule"/>
</dbReference>
<dbReference type="GO" id="GO:0000049">
    <property type="term" value="F:tRNA binding"/>
    <property type="evidence" value="ECO:0007669"/>
    <property type="project" value="UniProtKB-UniRule"/>
</dbReference>
<dbReference type="GO" id="GO:0070475">
    <property type="term" value="P:rRNA base methylation"/>
    <property type="evidence" value="ECO:0007669"/>
    <property type="project" value="UniProtKB-UniRule"/>
</dbReference>
<dbReference type="GO" id="GO:0030488">
    <property type="term" value="P:tRNA methylation"/>
    <property type="evidence" value="ECO:0007669"/>
    <property type="project" value="UniProtKB-UniRule"/>
</dbReference>
<dbReference type="CDD" id="cd01335">
    <property type="entry name" value="Radical_SAM"/>
    <property type="match status" value="1"/>
</dbReference>
<dbReference type="FunFam" id="1.10.150.530:FF:000004">
    <property type="entry name" value="Probable dual-specificity RNA methyltransferase RlmN"/>
    <property type="match status" value="1"/>
</dbReference>
<dbReference type="FunFam" id="3.20.20.70:FF:000014">
    <property type="entry name" value="Probable dual-specificity RNA methyltransferase RlmN"/>
    <property type="match status" value="1"/>
</dbReference>
<dbReference type="Gene3D" id="1.10.150.530">
    <property type="match status" value="1"/>
</dbReference>
<dbReference type="Gene3D" id="3.20.20.70">
    <property type="entry name" value="Aldolase class I"/>
    <property type="match status" value="1"/>
</dbReference>
<dbReference type="HAMAP" id="MF_01849">
    <property type="entry name" value="RNA_methyltr_RlmN"/>
    <property type="match status" value="1"/>
</dbReference>
<dbReference type="InterPro" id="IPR013785">
    <property type="entry name" value="Aldolase_TIM"/>
</dbReference>
<dbReference type="InterPro" id="IPR040072">
    <property type="entry name" value="Methyltransferase_A"/>
</dbReference>
<dbReference type="InterPro" id="IPR027492">
    <property type="entry name" value="RNA_MTrfase_RlmN"/>
</dbReference>
<dbReference type="InterPro" id="IPR004383">
    <property type="entry name" value="rRNA_lsu_MTrfase_RlmN/Cfr"/>
</dbReference>
<dbReference type="InterPro" id="IPR007197">
    <property type="entry name" value="rSAM"/>
</dbReference>
<dbReference type="NCBIfam" id="TIGR00048">
    <property type="entry name" value="rRNA_mod_RlmN"/>
    <property type="match status" value="1"/>
</dbReference>
<dbReference type="PANTHER" id="PTHR30544">
    <property type="entry name" value="23S RRNA METHYLTRANSFERASE"/>
    <property type="match status" value="1"/>
</dbReference>
<dbReference type="PANTHER" id="PTHR30544:SF5">
    <property type="entry name" value="RADICAL SAM CORE DOMAIN-CONTAINING PROTEIN"/>
    <property type="match status" value="1"/>
</dbReference>
<dbReference type="Pfam" id="PF04055">
    <property type="entry name" value="Radical_SAM"/>
    <property type="match status" value="1"/>
</dbReference>
<dbReference type="PIRSF" id="PIRSF006004">
    <property type="entry name" value="CHP00048"/>
    <property type="match status" value="1"/>
</dbReference>
<dbReference type="SFLD" id="SFLDF00275">
    <property type="entry name" value="adenosine_C2_methyltransferase"/>
    <property type="match status" value="1"/>
</dbReference>
<dbReference type="SFLD" id="SFLDG01062">
    <property type="entry name" value="methyltransferase_(Class_A)"/>
    <property type="match status" value="1"/>
</dbReference>
<dbReference type="SUPFAM" id="SSF102114">
    <property type="entry name" value="Radical SAM enzymes"/>
    <property type="match status" value="1"/>
</dbReference>
<dbReference type="PROSITE" id="PS51918">
    <property type="entry name" value="RADICAL_SAM"/>
    <property type="match status" value="1"/>
</dbReference>
<name>RLMN_MYCBT</name>
<keyword id="KW-0004">4Fe-4S</keyword>
<keyword id="KW-0963">Cytoplasm</keyword>
<keyword id="KW-1015">Disulfide bond</keyword>
<keyword id="KW-0408">Iron</keyword>
<keyword id="KW-0411">Iron-sulfur</keyword>
<keyword id="KW-0479">Metal-binding</keyword>
<keyword id="KW-0489">Methyltransferase</keyword>
<keyword id="KW-0698">rRNA processing</keyword>
<keyword id="KW-0949">S-adenosyl-L-methionine</keyword>
<keyword id="KW-0808">Transferase</keyword>
<keyword id="KW-0819">tRNA processing</keyword>
<sequence>MVPELMFDEPRPGRPPRHLADLDAAGRASAVAELGLPAFRAKQLAHQYYGRLIADPRQMTDLPAAVRDRIAGAMFPNLLTASADITCDAGQTRKTLWRAVDGTMFESVLMRYPRRNTVCISSQAGCGMACPFCATGQGGLTRNLSTAEILEQVRAGAAALRDDFGDRLSNVVFMGMGEPLANYARVLAAVQRITARPPSGFGISARAVTVSTVGLAPAIRNLADARLGVTLALSLHAPDDGLRDTLVPVNNRWRISEALDAARYYANVTGRRVSIEYALIRDVNDQPWRADLLGKRLHRVLGPLAHVNLIPLNPTPGSDWDASPKPVEREFVKRVRAKGVSCTVRDTRGREISAACGQLAAVGG</sequence>
<comment type="function">
    <text evidence="1">Specifically methylates position 2 of adenine 2503 in 23S rRNA and position 2 of adenine 37 in tRNAs.</text>
</comment>
<comment type="catalytic activity">
    <reaction evidence="1">
        <text>adenosine(2503) in 23S rRNA + 2 reduced [2Fe-2S]-[ferredoxin] + 2 S-adenosyl-L-methionine = 2-methyladenosine(2503) in 23S rRNA + 5'-deoxyadenosine + L-methionine + 2 oxidized [2Fe-2S]-[ferredoxin] + S-adenosyl-L-homocysteine</text>
        <dbReference type="Rhea" id="RHEA:42916"/>
        <dbReference type="Rhea" id="RHEA-COMP:10000"/>
        <dbReference type="Rhea" id="RHEA-COMP:10001"/>
        <dbReference type="Rhea" id="RHEA-COMP:10152"/>
        <dbReference type="Rhea" id="RHEA-COMP:10282"/>
        <dbReference type="ChEBI" id="CHEBI:17319"/>
        <dbReference type="ChEBI" id="CHEBI:33737"/>
        <dbReference type="ChEBI" id="CHEBI:33738"/>
        <dbReference type="ChEBI" id="CHEBI:57844"/>
        <dbReference type="ChEBI" id="CHEBI:57856"/>
        <dbReference type="ChEBI" id="CHEBI:59789"/>
        <dbReference type="ChEBI" id="CHEBI:74411"/>
        <dbReference type="ChEBI" id="CHEBI:74497"/>
        <dbReference type="EC" id="2.1.1.192"/>
    </reaction>
</comment>
<comment type="catalytic activity">
    <reaction evidence="1">
        <text>adenosine(37) in tRNA + 2 reduced [2Fe-2S]-[ferredoxin] + 2 S-adenosyl-L-methionine = 2-methyladenosine(37) in tRNA + 5'-deoxyadenosine + L-methionine + 2 oxidized [2Fe-2S]-[ferredoxin] + S-adenosyl-L-homocysteine</text>
        <dbReference type="Rhea" id="RHEA:43332"/>
        <dbReference type="Rhea" id="RHEA-COMP:10000"/>
        <dbReference type="Rhea" id="RHEA-COMP:10001"/>
        <dbReference type="Rhea" id="RHEA-COMP:10162"/>
        <dbReference type="Rhea" id="RHEA-COMP:10485"/>
        <dbReference type="ChEBI" id="CHEBI:17319"/>
        <dbReference type="ChEBI" id="CHEBI:33737"/>
        <dbReference type="ChEBI" id="CHEBI:33738"/>
        <dbReference type="ChEBI" id="CHEBI:57844"/>
        <dbReference type="ChEBI" id="CHEBI:57856"/>
        <dbReference type="ChEBI" id="CHEBI:59789"/>
        <dbReference type="ChEBI" id="CHEBI:74411"/>
        <dbReference type="ChEBI" id="CHEBI:74497"/>
        <dbReference type="EC" id="2.1.1.192"/>
    </reaction>
</comment>
<comment type="cofactor">
    <cofactor evidence="1">
        <name>[4Fe-4S] cluster</name>
        <dbReference type="ChEBI" id="CHEBI:49883"/>
    </cofactor>
    <text evidence="1">Binds 1 [4Fe-4S] cluster. The cluster is coordinated with 3 cysteines and an exchangeable S-adenosyl-L-methionine.</text>
</comment>
<comment type="subcellular location">
    <subcellularLocation>
        <location evidence="1">Cytoplasm</location>
    </subcellularLocation>
</comment>
<comment type="miscellaneous">
    <text evidence="1">Reaction proceeds by a ping-pong mechanism involving intermediate methylation of a conserved cysteine residue.</text>
</comment>
<comment type="similarity">
    <text evidence="1">Belongs to the radical SAM superfamily. RlmN family.</text>
</comment>
<reference key="1">
    <citation type="journal article" date="2009" name="Vaccine">
        <title>Whole genome sequence analysis of Mycobacterium bovis bacillus Calmette-Guerin (BCG) Tokyo 172: a comparative study of BCG vaccine substrains.</title>
        <authorList>
            <person name="Seki M."/>
            <person name="Honda I."/>
            <person name="Fujita I."/>
            <person name="Yano I."/>
            <person name="Yamamoto S."/>
            <person name="Koyama A."/>
        </authorList>
    </citation>
    <scope>NUCLEOTIDE SEQUENCE [LARGE SCALE GENOMIC DNA]</scope>
    <source>
        <strain>BCG / Tokyo 172 / ATCC 35737 / TMC 1019</strain>
    </source>
</reference>